<protein>
    <recommendedName>
        <fullName evidence="6">NPC intracellular cholesterol transporter 1 homolog 2</fullName>
    </recommendedName>
    <alternativeName>
        <fullName evidence="6">Niemann-Pick C1 protein homolog 2</fullName>
    </alternativeName>
</protein>
<keyword id="KW-0217">Developmental protein</keyword>
<keyword id="KW-1015">Disulfide bond</keyword>
<keyword id="KW-0325">Glycoprotein</keyword>
<keyword id="KW-0445">Lipid transport</keyword>
<keyword id="KW-0472">Membrane</keyword>
<keyword id="KW-1185">Reference proteome</keyword>
<keyword id="KW-0732">Signal</keyword>
<keyword id="KW-0812">Transmembrane</keyword>
<keyword id="KW-1133">Transmembrane helix</keyword>
<keyword id="KW-0813">Transport</keyword>
<proteinExistence type="inferred from homology"/>
<dbReference type="EMBL" id="FO080289">
    <property type="protein sequence ID" value="CCD62644.1"/>
    <property type="molecule type" value="Genomic_DNA"/>
</dbReference>
<dbReference type="PIR" id="S44797">
    <property type="entry name" value="S44797"/>
</dbReference>
<dbReference type="RefSeq" id="NP_498813.1">
    <property type="nucleotide sequence ID" value="NM_066412.4"/>
</dbReference>
<dbReference type="SMR" id="P34389"/>
<dbReference type="BioGRID" id="41369">
    <property type="interactions" value="1"/>
</dbReference>
<dbReference type="FunCoup" id="P34389">
    <property type="interactions" value="241"/>
</dbReference>
<dbReference type="STRING" id="6239.F09G8.4.1"/>
<dbReference type="TCDB" id="2.A.6.6.9">
    <property type="family name" value="the resistance-nodulation-cell division (rnd) superfamily"/>
</dbReference>
<dbReference type="GlyCosmos" id="P34389">
    <property type="glycosylation" value="11 sites, No reported glycans"/>
</dbReference>
<dbReference type="PaxDb" id="6239-F09G8.4"/>
<dbReference type="EnsemblMetazoa" id="F09G8.4.1">
    <property type="protein sequence ID" value="F09G8.4.1"/>
    <property type="gene ID" value="WBGene00003562"/>
</dbReference>
<dbReference type="GeneID" id="176165"/>
<dbReference type="KEGG" id="cel:CELE_F09G8.4"/>
<dbReference type="UCSC" id="F09G8.4">
    <property type="organism name" value="c. elegans"/>
</dbReference>
<dbReference type="AGR" id="WB:WBGene00003562"/>
<dbReference type="CTD" id="176165"/>
<dbReference type="WormBase" id="F09G8.4">
    <property type="protein sequence ID" value="CE24891"/>
    <property type="gene ID" value="WBGene00003562"/>
    <property type="gene designation" value="ncr-2"/>
</dbReference>
<dbReference type="eggNOG" id="KOG1933">
    <property type="taxonomic scope" value="Eukaryota"/>
</dbReference>
<dbReference type="GeneTree" id="ENSGT00940000156182"/>
<dbReference type="HOGENOM" id="CLU_002359_0_0_1"/>
<dbReference type="InParanoid" id="P34389"/>
<dbReference type="OMA" id="NIFIMVH"/>
<dbReference type="OrthoDB" id="6510177at2759"/>
<dbReference type="PhylomeDB" id="P34389"/>
<dbReference type="Reactome" id="R-CEL-8963678">
    <property type="pathway name" value="Intestinal lipid absorption"/>
</dbReference>
<dbReference type="Reactome" id="R-CEL-8964038">
    <property type="pathway name" value="LDL clearance"/>
</dbReference>
<dbReference type="PRO" id="PR:P34389"/>
<dbReference type="Proteomes" id="UP000001940">
    <property type="component" value="Chromosome III"/>
</dbReference>
<dbReference type="Bgee" id="WBGene00003562">
    <property type="expression patterns" value="Expressed in adult organism and 1 other cell type or tissue"/>
</dbReference>
<dbReference type="GO" id="GO:0005886">
    <property type="term" value="C:plasma membrane"/>
    <property type="evidence" value="ECO:0000318"/>
    <property type="project" value="GO_Central"/>
</dbReference>
<dbReference type="GO" id="GO:0015485">
    <property type="term" value="F:cholesterol binding"/>
    <property type="evidence" value="ECO:0000318"/>
    <property type="project" value="GO_Central"/>
</dbReference>
<dbReference type="GO" id="GO:0042632">
    <property type="term" value="P:cholesterol homeostasis"/>
    <property type="evidence" value="ECO:0000316"/>
    <property type="project" value="WormBase"/>
</dbReference>
<dbReference type="GO" id="GO:0030301">
    <property type="term" value="P:cholesterol transport"/>
    <property type="evidence" value="ECO:0000316"/>
    <property type="project" value="WormBase"/>
</dbReference>
<dbReference type="GO" id="GO:0040024">
    <property type="term" value="P:dauer larval development"/>
    <property type="evidence" value="ECO:0000316"/>
    <property type="project" value="WormBase"/>
</dbReference>
<dbReference type="GO" id="GO:0030299">
    <property type="term" value="P:intestinal cholesterol absorption"/>
    <property type="evidence" value="ECO:0000318"/>
    <property type="project" value="GO_Central"/>
</dbReference>
<dbReference type="GO" id="GO:0015918">
    <property type="term" value="P:sterol transport"/>
    <property type="evidence" value="ECO:0000318"/>
    <property type="project" value="GO_Central"/>
</dbReference>
<dbReference type="GO" id="GO:0040025">
    <property type="term" value="P:vulval development"/>
    <property type="evidence" value="ECO:0000316"/>
    <property type="project" value="WormBase"/>
</dbReference>
<dbReference type="Gene3D" id="1.20.1640.10">
    <property type="entry name" value="Multidrug efflux transporter AcrB transmembrane domain"/>
    <property type="match status" value="1"/>
</dbReference>
<dbReference type="InterPro" id="IPR053958">
    <property type="entry name" value="HMGCR/SNAP/NPC1-like_SSD"/>
</dbReference>
<dbReference type="InterPro" id="IPR053956">
    <property type="entry name" value="NPC1_MLD"/>
</dbReference>
<dbReference type="InterPro" id="IPR032190">
    <property type="entry name" value="NPC1_N"/>
</dbReference>
<dbReference type="InterPro" id="IPR000731">
    <property type="entry name" value="SSD"/>
</dbReference>
<dbReference type="PANTHER" id="PTHR45727">
    <property type="entry name" value="NPC INTRACELLULAR CHOLESTEROL TRANSPORTER 1"/>
    <property type="match status" value="1"/>
</dbReference>
<dbReference type="PANTHER" id="PTHR45727:SF2">
    <property type="entry name" value="NPC INTRACELLULAR CHOLESTEROL TRANSPORTER 1"/>
    <property type="match status" value="1"/>
</dbReference>
<dbReference type="Pfam" id="PF22314">
    <property type="entry name" value="NPC1_MLD"/>
    <property type="match status" value="1"/>
</dbReference>
<dbReference type="Pfam" id="PF16414">
    <property type="entry name" value="NPC1_N"/>
    <property type="match status" value="1"/>
</dbReference>
<dbReference type="Pfam" id="PF12349">
    <property type="entry name" value="Sterol-sensing"/>
    <property type="match status" value="1"/>
</dbReference>
<dbReference type="SUPFAM" id="SSF82866">
    <property type="entry name" value="Multidrug efflux transporter AcrB transmembrane domain"/>
    <property type="match status" value="1"/>
</dbReference>
<dbReference type="PROSITE" id="PS50156">
    <property type="entry name" value="SSD"/>
    <property type="match status" value="1"/>
</dbReference>
<accession>P34389</accession>
<accession>Q8MYQ6</accession>
<evidence type="ECO:0000250" key="1">
    <source>
        <dbReference type="UniProtKB" id="O15118"/>
    </source>
</evidence>
<evidence type="ECO:0000255" key="2"/>
<evidence type="ECO:0000255" key="3">
    <source>
        <dbReference type="PROSITE-ProRule" id="PRU00199"/>
    </source>
</evidence>
<evidence type="ECO:0000256" key="4">
    <source>
        <dbReference type="SAM" id="MobiDB-lite"/>
    </source>
</evidence>
<evidence type="ECO:0000269" key="5">
    <source>
    </source>
</evidence>
<evidence type="ECO:0000305" key="6"/>
<evidence type="ECO:0000312" key="7">
    <source>
        <dbReference type="WormBase" id="F09G8.4"/>
    </source>
</evidence>
<gene>
    <name evidence="7" type="primary">ncr-2</name>
    <name type="synonym">npc-2</name>
    <name type="ORF">F09G8.4</name>
</gene>
<comment type="function">
    <text evidence="1 5">Involved in the uptake or utilization of cholesterol (By similarity). Ncr-1 and ncr-2 act redundantly to prevent dauer larva formation under favorable growth conditions, and are required for the normal functioning of ADF, ASI and ASG neurons (PubMed:10801441).</text>
</comment>
<comment type="catalytic activity">
    <reaction evidence="1">
        <text>cholesterol(in) = cholesterol(out)</text>
        <dbReference type="Rhea" id="RHEA:39747"/>
        <dbReference type="ChEBI" id="CHEBI:16113"/>
    </reaction>
</comment>
<comment type="subcellular location">
    <subcellularLocation>
        <location evidence="6">Membrane</location>
        <topology evidence="6">Multi-pass membrane protein</topology>
    </subcellularLocation>
</comment>
<comment type="disruption phenotype">
    <text evidence="5">Both ncr-1 single mutant and ncr-1 and ncr-2 double mutants exhibit slow embryonic and larval development, and hyperactive egg-laying behavior (egg-laying constitutive (egl-c) phenotype). Ncr-1 and ncr-2 double mutants inappropriately and transiently form dauer larvae under favorable conditions (dauer-constitutive (daf-c) phenotype).</text>
</comment>
<comment type="similarity">
    <text evidence="6">Belongs to the patched family.</text>
</comment>
<sequence length="1274" mass="142634">MRQGGGGGERMVSVLFLLLIHLALCQAKCVMTECDGEEDSNHPPCKTNKSTYLPITVTRSLNPTYMARFEKYCSYLVQEEDKAQVCCTELQLKGMTDRISNAATILGSCPSCFDNFAKLWCQFTCSPDQSKFMKVMETTGPKNVVVKMEFKVNRDFVEGLYESCRHTWFANGLALRLMSLGGKVSFENFYGFMGTKNLAQSIPINTEFQFSRMKNAMNIPTTPCHKSAGPKVPACGAIDCPTNAHQLVDISKVEHLGTKVFHPHFPDFEWLLKICGCLALTVLLVFILKYSCHRRSAPNGEDGCYVDLGKGNLEVQFEGLCARYANAVIKHPLIFVSLGLIVAAACCSGNFKFHSLTHSVDQVSAADGETRRNEKKFIHSFGPNHRIEQIFINLPPTTKSMFNMPLFEEMFQLVGNIQNLTACYGNSSVKLDDICYKPIGKNHGCAIMSPTNYFQNKWTNFENAGPPTIDDEIFDDQHWEHLKYCIRNPLTVSTYSEMSCFGEFSGPIDPILVFGGSNESIKGAEMYYTARTIMITVLIRGPEDQAIAWETAFLNMMSRYEMKHANFTFMTETSVAEEIHTAVETDKIVSVIACAAVLIWVITMLGINHWPESSILSALVHHKLLISISAVMISVISVWCSIGMFSLFGVHATDNAIVVLFFVITCLGINRIFVIIRTFQANGHCYGLPNISYREMNHRISNVMRRSIPIVLTNSLICSTCLFLAGGVLPYVSVSMPAVEVFARHAGLAILMDTAFYLLVMLPLFQYDARREMSGKCEIWPWYELSNESKINLCMEAVDGNLRSPVDWFKLAIAPLLLKKICRIWIATFFFVSLIIACYCTLCLEFGFNQVMAFSETSYLTKHFQNMNENLNIGPPLWFVVEGDVKWHDPKMQNKFCTLAGCDDNSMGNKIRSLAYAENYKGNYLHGDVNIWLDSYLQFMHPRGSCCKMDGKQFCDPSNATHCSSCSSSSVASLTTTEYEFYRNLHHFLETPPSIQCAHGGMALAKPAINLTRNGKIQSAYFSTFFKKLNLSDSIQLYDAWRFAKYLADDIERELEIPGVKVYVYSTFFPYYEQYLTLSTTVYTLVVLVLFVAFVTISLFLRVNLAGSLVTVFVLLSSYLHLMEWMYLLGITVNVVSVINMAMSLGIAVEFFGQMLHGFYNSKKPKREERAFAALVSNGSTTLSGIFPAIMITAGCLSFADSRVLITYFCNQLVGIGLVCAVHGVVYMPTLLAIFGSDFYQNVSSEEESTDEAELQDTPPSTTSSTSSTSETSV</sequence>
<reference key="1">
    <citation type="journal article" date="1994" name="Nature">
        <title>2.2 Mb of contiguous nucleotide sequence from chromosome III of C. elegans.</title>
        <authorList>
            <person name="Wilson R."/>
            <person name="Ainscough R."/>
            <person name="Anderson K."/>
            <person name="Baynes C."/>
            <person name="Berks M."/>
            <person name="Bonfield J."/>
            <person name="Burton J."/>
            <person name="Connell M."/>
            <person name="Copsey T."/>
            <person name="Cooper J."/>
            <person name="Coulson A."/>
            <person name="Craxton M."/>
            <person name="Dear S."/>
            <person name="Du Z."/>
            <person name="Durbin R."/>
            <person name="Favello A."/>
            <person name="Fraser A."/>
            <person name="Fulton L."/>
            <person name="Gardner A."/>
            <person name="Green P."/>
            <person name="Hawkins T."/>
            <person name="Hillier L."/>
            <person name="Jier M."/>
            <person name="Johnston L."/>
            <person name="Jones M."/>
            <person name="Kershaw J."/>
            <person name="Kirsten J."/>
            <person name="Laisster N."/>
            <person name="Latreille P."/>
            <person name="Lightning J."/>
            <person name="Lloyd C."/>
            <person name="Mortimore B."/>
            <person name="O'Callaghan M."/>
            <person name="Parsons J."/>
            <person name="Percy C."/>
            <person name="Rifken L."/>
            <person name="Roopra A."/>
            <person name="Saunders D."/>
            <person name="Shownkeen R."/>
            <person name="Sims M."/>
            <person name="Smaldon N."/>
            <person name="Smith A."/>
            <person name="Smith M."/>
            <person name="Sonnhammer E."/>
            <person name="Staden R."/>
            <person name="Sulston J."/>
            <person name="Thierry-Mieg J."/>
            <person name="Thomas K."/>
            <person name="Vaudin M."/>
            <person name="Vaughan K."/>
            <person name="Waterston R."/>
            <person name="Watson A."/>
            <person name="Weinstock L."/>
            <person name="Wilkinson-Sproat J."/>
            <person name="Wohldman P."/>
        </authorList>
    </citation>
    <scope>NUCLEOTIDE SEQUENCE [LARGE SCALE GENOMIC DNA]</scope>
    <source>
        <strain>Bristol N2</strain>
    </source>
</reference>
<reference key="2">
    <citation type="journal article" date="1998" name="Science">
        <title>Genome sequence of the nematode C. elegans: a platform for investigating biology.</title>
        <authorList>
            <consortium name="The C. elegans sequencing consortium"/>
        </authorList>
    </citation>
    <scope>NUCLEOTIDE SEQUENCE [LARGE SCALE GENOMIC DNA]</scope>
    <source>
        <strain>Bristol N2</strain>
    </source>
</reference>
<reference key="3">
    <citation type="journal article" date="2000" name="Curr. Biol.">
        <title>A model for Niemann-Pick type C disease in the nematode Caenorhabditis elegans.</title>
        <authorList>
            <person name="Sym M."/>
            <person name="Basson M."/>
            <person name="Johnson C."/>
        </authorList>
    </citation>
    <scope>PARTIAL NUCLEOTIDE SEQUENCE [GENOMIC DNA]</scope>
    <scope>FUNCTION</scope>
    <scope>DISRUPTION PHENOTYPE</scope>
</reference>
<feature type="signal peptide" evidence="2">
    <location>
        <begin position="1"/>
        <end position="27"/>
    </location>
</feature>
<feature type="chain" id="PRO_0000023265" description="NPC intracellular cholesterol transporter 1 homolog 2">
    <location>
        <begin position="28"/>
        <end position="1274"/>
    </location>
</feature>
<feature type="transmembrane region" description="Helical" evidence="2">
    <location>
        <begin position="268"/>
        <end position="288"/>
    </location>
</feature>
<feature type="transmembrane region" description="Helical" evidence="2">
    <location>
        <begin position="327"/>
        <end position="347"/>
    </location>
</feature>
<feature type="transmembrane region" description="Helical" evidence="2">
    <location>
        <begin position="588"/>
        <end position="608"/>
    </location>
</feature>
<feature type="transmembrane region" description="Helical" evidence="2">
    <location>
        <begin position="630"/>
        <end position="650"/>
    </location>
</feature>
<feature type="transmembrane region" description="Helical" evidence="2">
    <location>
        <begin position="656"/>
        <end position="676"/>
    </location>
</feature>
<feature type="transmembrane region" description="Helical" evidence="2">
    <location>
        <begin position="722"/>
        <end position="742"/>
    </location>
</feature>
<feature type="transmembrane region" description="Helical" evidence="2">
    <location>
        <begin position="745"/>
        <end position="765"/>
    </location>
</feature>
<feature type="transmembrane region" description="Helical" evidence="2">
    <location>
        <begin position="824"/>
        <end position="844"/>
    </location>
</feature>
<feature type="transmembrane region" description="Helical" evidence="2">
    <location>
        <begin position="1079"/>
        <end position="1101"/>
    </location>
</feature>
<feature type="transmembrane region" description="Helical" evidence="2">
    <location>
        <begin position="1106"/>
        <end position="1128"/>
    </location>
</feature>
<feature type="transmembrane region" description="Helical" evidence="2">
    <location>
        <begin position="1138"/>
        <end position="1160"/>
    </location>
</feature>
<feature type="transmembrane region" description="Helical" evidence="2">
    <location>
        <begin position="1172"/>
        <end position="1194"/>
    </location>
</feature>
<feature type="transmembrane region" description="Helical" evidence="2">
    <location>
        <begin position="1204"/>
        <end position="1226"/>
    </location>
</feature>
<feature type="domain" description="SSD" evidence="3">
    <location>
        <begin position="586"/>
        <end position="767"/>
    </location>
</feature>
<feature type="region of interest" description="Disordered" evidence="4">
    <location>
        <begin position="1245"/>
        <end position="1274"/>
    </location>
</feature>
<feature type="compositionally biased region" description="Acidic residues" evidence="4">
    <location>
        <begin position="1245"/>
        <end position="1255"/>
    </location>
</feature>
<feature type="compositionally biased region" description="Low complexity" evidence="4">
    <location>
        <begin position="1258"/>
        <end position="1274"/>
    </location>
</feature>
<feature type="glycosylation site" description="N-linked (GlcNAc...) asparagine" evidence="2">
    <location>
        <position position="48"/>
    </location>
</feature>
<feature type="glycosylation site" description="N-linked (GlcNAc...) asparagine" evidence="2">
    <location>
        <position position="419"/>
    </location>
</feature>
<feature type="glycosylation site" description="N-linked (GlcNAc...) asparagine" evidence="2">
    <location>
        <position position="426"/>
    </location>
</feature>
<feature type="glycosylation site" description="N-linked (GlcNAc...) asparagine" evidence="2">
    <location>
        <position position="518"/>
    </location>
</feature>
<feature type="glycosylation site" description="N-linked (GlcNAc...) asparagine" evidence="2">
    <location>
        <position position="566"/>
    </location>
</feature>
<feature type="glycosylation site" description="N-linked (GlcNAc...) asparagine" evidence="2">
    <location>
        <position position="690"/>
    </location>
</feature>
<feature type="glycosylation site" description="N-linked (GlcNAc...) asparagine" evidence="2">
    <location>
        <position position="787"/>
    </location>
</feature>
<feature type="glycosylation site" description="N-linked (GlcNAc...) asparagine" evidence="2">
    <location>
        <position position="959"/>
    </location>
</feature>
<feature type="glycosylation site" description="N-linked (GlcNAc...) asparagine" evidence="2">
    <location>
        <position position="1010"/>
    </location>
</feature>
<feature type="glycosylation site" description="N-linked (GlcNAc...) asparagine" evidence="2">
    <location>
        <position position="1030"/>
    </location>
</feature>
<feature type="glycosylation site" description="N-linked (GlcNAc...) asparagine" evidence="2">
    <location>
        <position position="1242"/>
    </location>
</feature>
<feature type="disulfide bond" evidence="1">
    <location>
        <begin position="29"/>
        <end position="86"/>
    </location>
</feature>
<feature type="disulfide bond" evidence="1">
    <location>
        <begin position="34"/>
        <end position="45"/>
    </location>
</feature>
<feature type="disulfide bond" evidence="1">
    <location>
        <begin position="73"/>
        <end position="121"/>
    </location>
</feature>
<feature type="disulfide bond" evidence="1">
    <location>
        <begin position="87"/>
        <end position="125"/>
    </location>
</feature>
<feature type="disulfide bond" evidence="1">
    <location>
        <begin position="109"/>
        <end position="235"/>
    </location>
</feature>
<feature type="disulfide bond" evidence="1">
    <location>
        <begin position="112"/>
        <end position="164"/>
    </location>
</feature>
<feature type="disulfide bond" evidence="1">
    <location>
        <begin position="224"/>
        <end position="240"/>
    </location>
</feature>
<feature type="disulfide bond" evidence="1">
    <location>
        <begin position="435"/>
        <end position="445"/>
    </location>
</feature>
<feature type="disulfide bond" evidence="1">
    <location>
        <begin position="485"/>
        <end position="500"/>
    </location>
</feature>
<feature type="disulfide bond" evidence="1">
    <location>
        <begin position="897"/>
        <end position="902"/>
    </location>
</feature>
<feature type="disulfide bond" evidence="1">
    <location>
        <begin position="946"/>
        <end position="997"/>
    </location>
</feature>
<feature type="disulfide bond" evidence="1">
    <location>
        <begin position="947"/>
        <end position="966"/>
    </location>
</feature>
<feature type="disulfide bond" evidence="1">
    <location>
        <begin position="955"/>
        <end position="963"/>
    </location>
</feature>
<organism>
    <name type="scientific">Caenorhabditis elegans</name>
    <dbReference type="NCBI Taxonomy" id="6239"/>
    <lineage>
        <taxon>Eukaryota</taxon>
        <taxon>Metazoa</taxon>
        <taxon>Ecdysozoa</taxon>
        <taxon>Nematoda</taxon>
        <taxon>Chromadorea</taxon>
        <taxon>Rhabditida</taxon>
        <taxon>Rhabditina</taxon>
        <taxon>Rhabditomorpha</taxon>
        <taxon>Rhabditoidea</taxon>
        <taxon>Rhabditidae</taxon>
        <taxon>Peloderinae</taxon>
        <taxon>Caenorhabditis</taxon>
    </lineage>
</organism>
<name>NPC1B_CAEEL</name>